<dbReference type="EC" id="1.1.1.49" evidence="2"/>
<dbReference type="EMBL" id="CU329670">
    <property type="protein sequence ID" value="CAB16743.1"/>
    <property type="molecule type" value="Genomic_DNA"/>
</dbReference>
<dbReference type="PIR" id="T38699">
    <property type="entry name" value="T38699"/>
</dbReference>
<dbReference type="RefSeq" id="NP_593614.1">
    <property type="nucleotide sequence ID" value="NM_001019045.2"/>
</dbReference>
<dbReference type="SMR" id="O14137"/>
<dbReference type="BioGRID" id="279636">
    <property type="interactions" value="5"/>
</dbReference>
<dbReference type="FunCoup" id="O14137">
    <property type="interactions" value="477"/>
</dbReference>
<dbReference type="STRING" id="284812.O14137"/>
<dbReference type="iPTMnet" id="O14137"/>
<dbReference type="PaxDb" id="4896-SPAC3C7.13c.1"/>
<dbReference type="EnsemblFungi" id="SPAC3C7.13c.1">
    <property type="protein sequence ID" value="SPAC3C7.13c.1:pep"/>
    <property type="gene ID" value="SPAC3C7.13c"/>
</dbReference>
<dbReference type="KEGG" id="spo:2543207"/>
<dbReference type="PomBase" id="SPAC3C7.13c"/>
<dbReference type="VEuPathDB" id="FungiDB:SPAC3C7.13c"/>
<dbReference type="eggNOG" id="KOG0563">
    <property type="taxonomic scope" value="Eukaryota"/>
</dbReference>
<dbReference type="HOGENOM" id="CLU_013524_2_0_1"/>
<dbReference type="InParanoid" id="O14137"/>
<dbReference type="OMA" id="TWNNKHI"/>
<dbReference type="PhylomeDB" id="O14137"/>
<dbReference type="UniPathway" id="UPA00115">
    <property type="reaction ID" value="UER00408"/>
</dbReference>
<dbReference type="PRO" id="PR:O14137"/>
<dbReference type="Proteomes" id="UP000002485">
    <property type="component" value="Chromosome I"/>
</dbReference>
<dbReference type="GO" id="GO:0005829">
    <property type="term" value="C:cytosol"/>
    <property type="evidence" value="ECO:0000318"/>
    <property type="project" value="GO_Central"/>
</dbReference>
<dbReference type="GO" id="GO:0004345">
    <property type="term" value="F:glucose-6-phosphate dehydrogenase activity"/>
    <property type="evidence" value="ECO:0000318"/>
    <property type="project" value="GO_Central"/>
</dbReference>
<dbReference type="GO" id="GO:0050661">
    <property type="term" value="F:NADP binding"/>
    <property type="evidence" value="ECO:0007669"/>
    <property type="project" value="InterPro"/>
</dbReference>
<dbReference type="GO" id="GO:0006006">
    <property type="term" value="P:glucose metabolic process"/>
    <property type="evidence" value="ECO:0000318"/>
    <property type="project" value="GO_Central"/>
</dbReference>
<dbReference type="GO" id="GO:0009051">
    <property type="term" value="P:pentose-phosphate shunt, oxidative branch"/>
    <property type="evidence" value="ECO:0000318"/>
    <property type="project" value="GO_Central"/>
</dbReference>
<dbReference type="FunFam" id="3.30.360.10:FF:000011">
    <property type="entry name" value="Glucose-6-phosphate 1-dehydrogenase"/>
    <property type="match status" value="1"/>
</dbReference>
<dbReference type="FunFam" id="3.40.50.720:FF:000079">
    <property type="entry name" value="Glucose-6-phosphate 1-dehydrogenase"/>
    <property type="match status" value="1"/>
</dbReference>
<dbReference type="Gene3D" id="3.30.360.10">
    <property type="entry name" value="Dihydrodipicolinate Reductase, domain 2"/>
    <property type="match status" value="1"/>
</dbReference>
<dbReference type="Gene3D" id="3.40.50.720">
    <property type="entry name" value="NAD(P)-binding Rossmann-like Domain"/>
    <property type="match status" value="1"/>
</dbReference>
<dbReference type="HAMAP" id="MF_00966">
    <property type="entry name" value="G6PD"/>
    <property type="match status" value="1"/>
</dbReference>
<dbReference type="InterPro" id="IPR001282">
    <property type="entry name" value="G6P_DH"/>
</dbReference>
<dbReference type="InterPro" id="IPR022675">
    <property type="entry name" value="G6P_DH_C"/>
</dbReference>
<dbReference type="InterPro" id="IPR022674">
    <property type="entry name" value="G6P_DH_NAD-bd"/>
</dbReference>
<dbReference type="InterPro" id="IPR036291">
    <property type="entry name" value="NAD(P)-bd_dom_sf"/>
</dbReference>
<dbReference type="NCBIfam" id="TIGR00871">
    <property type="entry name" value="zwf"/>
    <property type="match status" value="1"/>
</dbReference>
<dbReference type="PANTHER" id="PTHR23429:SF21">
    <property type="entry name" value="GLUCOSE-6-PHOSPHATE 1-DEHYDROGENASE C7.13C-RELATED"/>
    <property type="match status" value="1"/>
</dbReference>
<dbReference type="PANTHER" id="PTHR23429">
    <property type="entry name" value="GLUCOSE-6-PHOSPHATE 1-DEHYDROGENASE G6PD"/>
    <property type="match status" value="1"/>
</dbReference>
<dbReference type="Pfam" id="PF02781">
    <property type="entry name" value="G6PD_C"/>
    <property type="match status" value="1"/>
</dbReference>
<dbReference type="Pfam" id="PF00479">
    <property type="entry name" value="G6PD_N"/>
    <property type="match status" value="1"/>
</dbReference>
<dbReference type="PIRSF" id="PIRSF000110">
    <property type="entry name" value="G6PD"/>
    <property type="match status" value="1"/>
</dbReference>
<dbReference type="PRINTS" id="PR00079">
    <property type="entry name" value="G6PDHDRGNASE"/>
</dbReference>
<dbReference type="SUPFAM" id="SSF55347">
    <property type="entry name" value="Glyceraldehyde-3-phosphate dehydrogenase-like, C-terminal domain"/>
    <property type="match status" value="1"/>
</dbReference>
<dbReference type="SUPFAM" id="SSF51735">
    <property type="entry name" value="NAD(P)-binding Rossmann-fold domains"/>
    <property type="match status" value="1"/>
</dbReference>
<sequence>MVTFMVFGASGNLANKKTFPALFHLFKRNLVDRSSFYVLGYARSKIPIGEFRESIRESVKPDTESKQVFQDFIDRVSYFSGQYDQSSSYVEFRKHLESVEKKADSSKALRIFYIALPPSVYVTVSSHIYENLYLPGKSRLVIEKPFGKNYQSAVKLKEEVHKHWKEEEIYRIDHYTAKDMVNNFFTLRFANSSSIDAVLNRHSIQSVEIHMYETGGCEGRIGYYDANGVVRDVVQNHLTQIFCIAAMNEPKSASASDVRAEKVNLLKATRPASLKESMLGQYTTSEDGKIPGYLDLEGVPKDSKATTFAASTLHVDNDRWKGVPFVFVSGKRMKKGEVYIKYYFRLKDSGIFSDVKRRRYLILHVQPEEFVNLTCTINKPMTTDLQPIDAYASLNYNEQFKDLMKEKRDGYEILFEDAIRGDPTKFIRYDEVEYAWKIWDEILDSPKKPIPYPAGSDGPEGLEAYMKRHLGHE</sequence>
<name>G6PD3_SCHPO</name>
<organism>
    <name type="scientific">Schizosaccharomyces pombe (strain 972 / ATCC 24843)</name>
    <name type="common">Fission yeast</name>
    <dbReference type="NCBI Taxonomy" id="284812"/>
    <lineage>
        <taxon>Eukaryota</taxon>
        <taxon>Fungi</taxon>
        <taxon>Dikarya</taxon>
        <taxon>Ascomycota</taxon>
        <taxon>Taphrinomycotina</taxon>
        <taxon>Schizosaccharomycetes</taxon>
        <taxon>Schizosaccharomycetales</taxon>
        <taxon>Schizosaccharomycetaceae</taxon>
        <taxon>Schizosaccharomyces</taxon>
    </lineage>
</organism>
<gene>
    <name type="ORF">SPAC3C7.13c</name>
</gene>
<protein>
    <recommendedName>
        <fullName>Probable glucose-6-phosphate 1-dehydrogenase C7.13c</fullName>
        <shortName>G6PD</shortName>
        <ecNumber evidence="2">1.1.1.49</ecNumber>
    </recommendedName>
</protein>
<proteinExistence type="inferred from homology"/>
<comment type="function">
    <text evidence="2">Catalyzes the rate-limiting step of the oxidative pentose-phosphate pathway, which represents a route for the dissimilation of carbohydrates besides glycolysis. The main function of this enzyme is to provide reducing power (NADPH) and pentose phosphates for fatty acid and nucleic acid synthesis (By similarity).</text>
</comment>
<comment type="catalytic activity">
    <reaction evidence="2">
        <text>D-glucose 6-phosphate + NADP(+) = 6-phospho-D-glucono-1,5-lactone + NADPH + H(+)</text>
        <dbReference type="Rhea" id="RHEA:15841"/>
        <dbReference type="ChEBI" id="CHEBI:15378"/>
        <dbReference type="ChEBI" id="CHEBI:57783"/>
        <dbReference type="ChEBI" id="CHEBI:57955"/>
        <dbReference type="ChEBI" id="CHEBI:58349"/>
        <dbReference type="ChEBI" id="CHEBI:61548"/>
        <dbReference type="EC" id="1.1.1.49"/>
    </reaction>
</comment>
<comment type="pathway">
    <text evidence="3">Carbohydrate degradation; pentose phosphate pathway; D-ribulose 5-phosphate from D-glucose 6-phosphate (oxidative stage): step 1/3.</text>
</comment>
<comment type="subcellular location">
    <subcellularLocation>
        <location evidence="2">Cytoplasm</location>
    </subcellularLocation>
</comment>
<comment type="similarity">
    <text evidence="3">Belongs to the glucose-6-phosphate dehydrogenase family.</text>
</comment>
<keyword id="KW-0119">Carbohydrate metabolism</keyword>
<keyword id="KW-0963">Cytoplasm</keyword>
<keyword id="KW-0313">Glucose metabolism</keyword>
<keyword id="KW-0521">NADP</keyword>
<keyword id="KW-0560">Oxidoreductase</keyword>
<keyword id="KW-1185">Reference proteome</keyword>
<accession>O14137</accession>
<evidence type="ECO:0000250" key="1">
    <source>
        <dbReference type="UniProtKB" id="P11411"/>
    </source>
</evidence>
<evidence type="ECO:0000250" key="2">
    <source>
        <dbReference type="UniProtKB" id="P11413"/>
    </source>
</evidence>
<evidence type="ECO:0000305" key="3"/>
<feature type="chain" id="PRO_0000337688" description="Probable glucose-6-phosphate 1-dehydrogenase C7.13c">
    <location>
        <begin position="1"/>
        <end position="473"/>
    </location>
</feature>
<feature type="active site" description="Proton acceptor" evidence="1">
    <location>
        <position position="237"/>
    </location>
</feature>
<feature type="binding site" evidence="2">
    <location>
        <position position="43"/>
    </location>
    <ligand>
        <name>NADP(+)</name>
        <dbReference type="ChEBI" id="CHEBI:58349"/>
        <label>1</label>
    </ligand>
</feature>
<feature type="binding site" evidence="2">
    <location>
        <position position="121"/>
    </location>
    <ligand>
        <name>NADP(+)</name>
        <dbReference type="ChEBI" id="CHEBI:58349"/>
        <label>1</label>
    </ligand>
</feature>
<feature type="binding site" evidence="2">
    <location>
        <position position="144"/>
    </location>
    <ligand>
        <name>D-glucose 6-phosphate</name>
        <dbReference type="ChEBI" id="CHEBI:61548"/>
    </ligand>
</feature>
<feature type="binding site" evidence="2">
    <location>
        <position position="144"/>
    </location>
    <ligand>
        <name>NADP(+)</name>
        <dbReference type="ChEBI" id="CHEBI:58349"/>
        <label>1</label>
    </ligand>
</feature>
<feature type="binding site" evidence="2">
    <location>
        <begin position="174"/>
        <end position="178"/>
    </location>
    <ligand>
        <name>D-glucose 6-phosphate</name>
        <dbReference type="ChEBI" id="CHEBI:61548"/>
    </ligand>
</feature>
<feature type="binding site" evidence="2">
    <location>
        <position position="213"/>
    </location>
    <ligand>
        <name>D-glucose 6-phosphate</name>
        <dbReference type="ChEBI" id="CHEBI:61548"/>
    </ligand>
</feature>
<feature type="binding site" evidence="2">
    <location>
        <position position="232"/>
    </location>
    <ligand>
        <name>D-glucose 6-phosphate</name>
        <dbReference type="ChEBI" id="CHEBI:61548"/>
    </ligand>
</feature>
<feature type="binding site" evidence="2">
    <location>
        <position position="331"/>
    </location>
    <ligand>
        <name>D-glucose 6-phosphate</name>
        <dbReference type="ChEBI" id="CHEBI:61548"/>
    </ligand>
</feature>
<feature type="binding site" evidence="2">
    <location>
        <position position="341"/>
    </location>
    <ligand>
        <name>NADP(+)</name>
        <dbReference type="ChEBI" id="CHEBI:58349"/>
        <label>2</label>
    </ligand>
</feature>
<feature type="binding site" evidence="2">
    <location>
        <position position="366"/>
    </location>
    <ligand>
        <name>D-glucose 6-phosphate</name>
        <dbReference type="ChEBI" id="CHEBI:61548"/>
    </ligand>
</feature>
<reference key="1">
    <citation type="journal article" date="2002" name="Nature">
        <title>The genome sequence of Schizosaccharomyces pombe.</title>
        <authorList>
            <person name="Wood V."/>
            <person name="Gwilliam R."/>
            <person name="Rajandream M.A."/>
            <person name="Lyne M.H."/>
            <person name="Lyne R."/>
            <person name="Stewart A."/>
            <person name="Sgouros J.G."/>
            <person name="Peat N."/>
            <person name="Hayles J."/>
            <person name="Baker S.G."/>
            <person name="Basham D."/>
            <person name="Bowman S."/>
            <person name="Brooks K."/>
            <person name="Brown D."/>
            <person name="Brown S."/>
            <person name="Chillingworth T."/>
            <person name="Churcher C.M."/>
            <person name="Collins M."/>
            <person name="Connor R."/>
            <person name="Cronin A."/>
            <person name="Davis P."/>
            <person name="Feltwell T."/>
            <person name="Fraser A."/>
            <person name="Gentles S."/>
            <person name="Goble A."/>
            <person name="Hamlin N."/>
            <person name="Harris D.E."/>
            <person name="Hidalgo J."/>
            <person name="Hodgson G."/>
            <person name="Holroyd S."/>
            <person name="Hornsby T."/>
            <person name="Howarth S."/>
            <person name="Huckle E.J."/>
            <person name="Hunt S."/>
            <person name="Jagels K."/>
            <person name="James K.D."/>
            <person name="Jones L."/>
            <person name="Jones M."/>
            <person name="Leather S."/>
            <person name="McDonald S."/>
            <person name="McLean J."/>
            <person name="Mooney P."/>
            <person name="Moule S."/>
            <person name="Mungall K.L."/>
            <person name="Murphy L.D."/>
            <person name="Niblett D."/>
            <person name="Odell C."/>
            <person name="Oliver K."/>
            <person name="O'Neil S."/>
            <person name="Pearson D."/>
            <person name="Quail M.A."/>
            <person name="Rabbinowitsch E."/>
            <person name="Rutherford K.M."/>
            <person name="Rutter S."/>
            <person name="Saunders D."/>
            <person name="Seeger K."/>
            <person name="Sharp S."/>
            <person name="Skelton J."/>
            <person name="Simmonds M.N."/>
            <person name="Squares R."/>
            <person name="Squares S."/>
            <person name="Stevens K."/>
            <person name="Taylor K."/>
            <person name="Taylor R.G."/>
            <person name="Tivey A."/>
            <person name="Walsh S.V."/>
            <person name="Warren T."/>
            <person name="Whitehead S."/>
            <person name="Woodward J.R."/>
            <person name="Volckaert G."/>
            <person name="Aert R."/>
            <person name="Robben J."/>
            <person name="Grymonprez B."/>
            <person name="Weltjens I."/>
            <person name="Vanstreels E."/>
            <person name="Rieger M."/>
            <person name="Schaefer M."/>
            <person name="Mueller-Auer S."/>
            <person name="Gabel C."/>
            <person name="Fuchs M."/>
            <person name="Duesterhoeft A."/>
            <person name="Fritzc C."/>
            <person name="Holzer E."/>
            <person name="Moestl D."/>
            <person name="Hilbert H."/>
            <person name="Borzym K."/>
            <person name="Langer I."/>
            <person name="Beck A."/>
            <person name="Lehrach H."/>
            <person name="Reinhardt R."/>
            <person name="Pohl T.M."/>
            <person name="Eger P."/>
            <person name="Zimmermann W."/>
            <person name="Wedler H."/>
            <person name="Wambutt R."/>
            <person name="Purnelle B."/>
            <person name="Goffeau A."/>
            <person name="Cadieu E."/>
            <person name="Dreano S."/>
            <person name="Gloux S."/>
            <person name="Lelaure V."/>
            <person name="Mottier S."/>
            <person name="Galibert F."/>
            <person name="Aves S.J."/>
            <person name="Xiang Z."/>
            <person name="Hunt C."/>
            <person name="Moore K."/>
            <person name="Hurst S.M."/>
            <person name="Lucas M."/>
            <person name="Rochet M."/>
            <person name="Gaillardin C."/>
            <person name="Tallada V.A."/>
            <person name="Garzon A."/>
            <person name="Thode G."/>
            <person name="Daga R.R."/>
            <person name="Cruzado L."/>
            <person name="Jimenez J."/>
            <person name="Sanchez M."/>
            <person name="del Rey F."/>
            <person name="Benito J."/>
            <person name="Dominguez A."/>
            <person name="Revuelta J.L."/>
            <person name="Moreno S."/>
            <person name="Armstrong J."/>
            <person name="Forsburg S.L."/>
            <person name="Cerutti L."/>
            <person name="Lowe T."/>
            <person name="McCombie W.R."/>
            <person name="Paulsen I."/>
            <person name="Potashkin J."/>
            <person name="Shpakovski G.V."/>
            <person name="Ussery D."/>
            <person name="Barrell B.G."/>
            <person name="Nurse P."/>
        </authorList>
    </citation>
    <scope>NUCLEOTIDE SEQUENCE [LARGE SCALE GENOMIC DNA]</scope>
    <source>
        <strain>972 / ATCC 24843</strain>
    </source>
</reference>